<evidence type="ECO:0000250" key="1">
    <source>
        <dbReference type="UniProtKB" id="Q9D2Z1"/>
    </source>
</evidence>
<evidence type="ECO:0000255" key="2"/>
<evidence type="ECO:0000255" key="3">
    <source>
        <dbReference type="PROSITE-ProRule" id="PRU00114"/>
    </source>
</evidence>
<evidence type="ECO:0000256" key="4">
    <source>
        <dbReference type="SAM" id="MobiDB-lite"/>
    </source>
</evidence>
<evidence type="ECO:0000305" key="5"/>
<evidence type="ECO:0000312" key="6">
    <source>
        <dbReference type="HGNC" id="HGNC:24879"/>
    </source>
</evidence>
<reference key="1">
    <citation type="submission" date="2007-06" db="EMBL/GenBank/DDBJ databases">
        <title>Cloning of new carcinoembryonic antigen (CEA) family members.</title>
        <authorList>
            <person name="Paptistella M."/>
            <person name="Eisenried A."/>
            <person name="Kammerer R."/>
            <person name="Zimmermann W."/>
        </authorList>
    </citation>
    <scope>NUCLEOTIDE SEQUENCE [MRNA] (ISOFORMS 1; 2; 3 AND 4)</scope>
    <scope>VARIANTS LEU-355 AND CYS-512</scope>
    <source>
        <tissue>Small intestine</tissue>
    </source>
</reference>
<reference key="2">
    <citation type="journal article" date="2003" name="Genome Res.">
        <title>The secreted protein discovery initiative (SPDI), a large-scale effort to identify novel human secreted and transmembrane proteins: a bioinformatics assessment.</title>
        <authorList>
            <person name="Clark H.F."/>
            <person name="Gurney A.L."/>
            <person name="Abaya E."/>
            <person name="Baker K."/>
            <person name="Baldwin D.T."/>
            <person name="Brush J."/>
            <person name="Chen J."/>
            <person name="Chow B."/>
            <person name="Chui C."/>
            <person name="Crowley C."/>
            <person name="Currell B."/>
            <person name="Deuel B."/>
            <person name="Dowd P."/>
            <person name="Eaton D."/>
            <person name="Foster J.S."/>
            <person name="Grimaldi C."/>
            <person name="Gu Q."/>
            <person name="Hass P.E."/>
            <person name="Heldens S."/>
            <person name="Huang A."/>
            <person name="Kim H.S."/>
            <person name="Klimowski L."/>
            <person name="Jin Y."/>
            <person name="Johnson S."/>
            <person name="Lee J."/>
            <person name="Lewis L."/>
            <person name="Liao D."/>
            <person name="Mark M.R."/>
            <person name="Robbie E."/>
            <person name="Sanchez C."/>
            <person name="Schoenfeld J."/>
            <person name="Seshagiri S."/>
            <person name="Simmons L."/>
            <person name="Singh J."/>
            <person name="Smith V."/>
            <person name="Stinson J."/>
            <person name="Vagts A."/>
            <person name="Vandlen R.L."/>
            <person name="Watanabe C."/>
            <person name="Wieand D."/>
            <person name="Woods K."/>
            <person name="Xie M.-H."/>
            <person name="Yansura D.G."/>
            <person name="Yi S."/>
            <person name="Yu G."/>
            <person name="Yuan J."/>
            <person name="Zhang M."/>
            <person name="Zhang Z."/>
            <person name="Goddard A.D."/>
            <person name="Wood W.I."/>
            <person name="Godowski P.J."/>
            <person name="Gray A.M."/>
        </authorList>
    </citation>
    <scope>NUCLEOTIDE SEQUENCE [LARGE SCALE MRNA] (ISOFORM 5)</scope>
    <scope>VARIANT CYS-512</scope>
</reference>
<reference key="3">
    <citation type="journal article" date="2004" name="Nature">
        <title>The DNA sequence and biology of human chromosome 19.</title>
        <authorList>
            <person name="Grimwood J."/>
            <person name="Gordon L.A."/>
            <person name="Olsen A.S."/>
            <person name="Terry A."/>
            <person name="Schmutz J."/>
            <person name="Lamerdin J.E."/>
            <person name="Hellsten U."/>
            <person name="Goodstein D."/>
            <person name="Couronne O."/>
            <person name="Tran-Gyamfi M."/>
            <person name="Aerts A."/>
            <person name="Altherr M."/>
            <person name="Ashworth L."/>
            <person name="Bajorek E."/>
            <person name="Black S."/>
            <person name="Branscomb E."/>
            <person name="Caenepeel S."/>
            <person name="Carrano A.V."/>
            <person name="Caoile C."/>
            <person name="Chan Y.M."/>
            <person name="Christensen M."/>
            <person name="Cleland C.A."/>
            <person name="Copeland A."/>
            <person name="Dalin E."/>
            <person name="Dehal P."/>
            <person name="Denys M."/>
            <person name="Detter J.C."/>
            <person name="Escobar J."/>
            <person name="Flowers D."/>
            <person name="Fotopulos D."/>
            <person name="Garcia C."/>
            <person name="Georgescu A.M."/>
            <person name="Glavina T."/>
            <person name="Gomez M."/>
            <person name="Gonzales E."/>
            <person name="Groza M."/>
            <person name="Hammon N."/>
            <person name="Hawkins T."/>
            <person name="Haydu L."/>
            <person name="Ho I."/>
            <person name="Huang W."/>
            <person name="Israni S."/>
            <person name="Jett J."/>
            <person name="Kadner K."/>
            <person name="Kimball H."/>
            <person name="Kobayashi A."/>
            <person name="Larionov V."/>
            <person name="Leem S.-H."/>
            <person name="Lopez F."/>
            <person name="Lou Y."/>
            <person name="Lowry S."/>
            <person name="Malfatti S."/>
            <person name="Martinez D."/>
            <person name="McCready P.M."/>
            <person name="Medina C."/>
            <person name="Morgan J."/>
            <person name="Nelson K."/>
            <person name="Nolan M."/>
            <person name="Ovcharenko I."/>
            <person name="Pitluck S."/>
            <person name="Pollard M."/>
            <person name="Popkie A.P."/>
            <person name="Predki P."/>
            <person name="Quan G."/>
            <person name="Ramirez L."/>
            <person name="Rash S."/>
            <person name="Retterer J."/>
            <person name="Rodriguez A."/>
            <person name="Rogers S."/>
            <person name="Salamov A."/>
            <person name="Salazar A."/>
            <person name="She X."/>
            <person name="Smith D."/>
            <person name="Slezak T."/>
            <person name="Solovyev V."/>
            <person name="Thayer N."/>
            <person name="Tice H."/>
            <person name="Tsai M."/>
            <person name="Ustaszewska A."/>
            <person name="Vo N."/>
            <person name="Wagner M."/>
            <person name="Wheeler J."/>
            <person name="Wu K."/>
            <person name="Xie G."/>
            <person name="Yang J."/>
            <person name="Dubchak I."/>
            <person name="Furey T.S."/>
            <person name="DeJong P."/>
            <person name="Dickson M."/>
            <person name="Gordon D."/>
            <person name="Eichler E.E."/>
            <person name="Pennacchio L.A."/>
            <person name="Richardson P."/>
            <person name="Stubbs L."/>
            <person name="Rokhsar D.S."/>
            <person name="Myers R.M."/>
            <person name="Rubin E.M."/>
            <person name="Lucas S.M."/>
        </authorList>
    </citation>
    <scope>NUCLEOTIDE SEQUENCE [LARGE SCALE GENOMIC DNA]</scope>
</reference>
<name>CEA20_HUMAN</name>
<gene>
    <name evidence="6" type="primary">CEACAM20</name>
    <name evidence="6" type="ORF">UNQ9366/PRO34155</name>
</gene>
<protein>
    <recommendedName>
        <fullName evidence="5">Cell adhesion molecule CEACAM20</fullName>
    </recommendedName>
    <alternativeName>
        <fullName evidence="6">Carcinoembryonic antigen-related cell adhesion molecule 20</fullName>
        <shortName evidence="6">CEA cell adhesion molecule 20</shortName>
    </alternativeName>
</protein>
<comment type="function">
    <text evidence="1">Together with the tyrosine-protein kinase SYK, enhances production of the cytokine CXCL8/IL-8 via the NFKB pathway and may thus have a role in the intestinal immune response.</text>
</comment>
<comment type="subunit">
    <text evidence="1">Interacts (via extracellular domain) with PTPRH (via extracellular domain); the interaction dephosphorylates CEACAM20. Interacts (phosphorylated form) with SYK (via SH2 domains); the interaction further enhances CEACAM20 phosphorylation.</text>
</comment>
<comment type="subcellular location">
    <subcellularLocation>
        <location evidence="1">Cell projection</location>
        <location evidence="1">Microvillus membrane</location>
        <topology evidence="5">Single-pass type I membrane protein</topology>
    </subcellularLocation>
    <subcellularLocation>
        <location evidence="1">Apical cell membrane</location>
        <topology evidence="5">Single-pass type I membrane protein</topology>
    </subcellularLocation>
    <text>Colocalizes with PTPRH and CEACAM1 at the apical brush border of intestinal cells.</text>
</comment>
<comment type="alternative products">
    <event type="alternative splicing"/>
    <isoform>
        <id>Q6UY09-1</id>
        <name>1</name>
        <sequence type="displayed"/>
    </isoform>
    <isoform>
        <id>Q6UY09-2</id>
        <name>2</name>
        <sequence type="described" ref="VSP_059368"/>
    </isoform>
    <isoform>
        <id>Q6UY09-3</id>
        <name>3</name>
        <sequence type="described" ref="VSP_059367"/>
    </isoform>
    <isoform>
        <id>Q6UY09-4</id>
        <name>4</name>
        <sequence type="described" ref="VSP_059367 VSP_059368"/>
    </isoform>
    <isoform>
        <id>Q6UY09-5</id>
        <name>5</name>
        <sequence type="described" ref="VSP_059369"/>
    </isoform>
</comment>
<comment type="PTM">
    <text evidence="1">Phosphorylated on tyrosine residues by SYK, SRC and FYN in vitro.</text>
</comment>
<comment type="similarity">
    <text evidence="5">Belongs to the immunoglobulin superfamily. CEA family.</text>
</comment>
<keyword id="KW-0025">Alternative splicing</keyword>
<keyword id="KW-1003">Cell membrane</keyword>
<keyword id="KW-0966">Cell projection</keyword>
<keyword id="KW-1015">Disulfide bond</keyword>
<keyword id="KW-0325">Glycoprotein</keyword>
<keyword id="KW-0391">Immunity</keyword>
<keyword id="KW-0393">Immunoglobulin domain</keyword>
<keyword id="KW-0472">Membrane</keyword>
<keyword id="KW-0597">Phosphoprotein</keyword>
<keyword id="KW-1267">Proteomics identification</keyword>
<keyword id="KW-1185">Reference proteome</keyword>
<keyword id="KW-0677">Repeat</keyword>
<keyword id="KW-0732">Signal</keyword>
<keyword id="KW-0812">Transmembrane</keyword>
<keyword id="KW-1133">Transmembrane helix</keyword>
<feature type="signal peptide" evidence="2">
    <location>
        <begin position="1"/>
        <end position="30"/>
    </location>
</feature>
<feature type="chain" id="PRO_0000014577" description="Cell adhesion molecule CEACAM20">
    <location>
        <begin position="31"/>
        <end position="596"/>
    </location>
</feature>
<feature type="topological domain" description="Extracellular" evidence="2">
    <location>
        <begin position="31"/>
        <end position="450"/>
    </location>
</feature>
<feature type="transmembrane region" description="Helical" evidence="2">
    <location>
        <begin position="451"/>
        <end position="471"/>
    </location>
</feature>
<feature type="topological domain" description="Cytoplasmic" evidence="2">
    <location>
        <begin position="472"/>
        <end position="585"/>
    </location>
</feature>
<feature type="domain" description="Ig-like C2-type 1">
    <location>
        <begin position="58"/>
        <end position="154"/>
    </location>
</feature>
<feature type="domain" description="Ig-like C2-type 2">
    <location>
        <begin position="160"/>
        <end position="246"/>
    </location>
</feature>
<feature type="domain" description="Ig-like C2-type 3">
    <location>
        <begin position="256"/>
        <end position="341"/>
    </location>
</feature>
<feature type="domain" description="Ig-like C2-type 4">
    <location>
        <begin position="346"/>
        <end position="432"/>
    </location>
</feature>
<feature type="region of interest" description="Disordered" evidence="4">
    <location>
        <begin position="477"/>
        <end position="510"/>
    </location>
</feature>
<feature type="region of interest" description="Disordered" evidence="4">
    <location>
        <begin position="527"/>
        <end position="563"/>
    </location>
</feature>
<feature type="compositionally biased region" description="Low complexity" evidence="4">
    <location>
        <begin position="501"/>
        <end position="510"/>
    </location>
</feature>
<feature type="compositionally biased region" description="Pro residues" evidence="4">
    <location>
        <begin position="553"/>
        <end position="562"/>
    </location>
</feature>
<feature type="modified residue" description="Phosphotyrosine" evidence="1">
    <location>
        <position position="578"/>
    </location>
</feature>
<feature type="modified residue" description="Phosphotyrosine" evidence="1">
    <location>
        <position position="589"/>
    </location>
</feature>
<feature type="glycosylation site" description="N-linked (GlcNAc...) asparagine" evidence="2">
    <location>
        <position position="96"/>
    </location>
</feature>
<feature type="glycosylation site" description="N-linked (GlcNAc...) asparagine" evidence="2">
    <location>
        <position position="105"/>
    </location>
</feature>
<feature type="glycosylation site" description="N-linked (GlcNAc...) asparagine" evidence="2">
    <location>
        <position position="280"/>
    </location>
</feature>
<feature type="glycosylation site" description="N-linked (GlcNAc...) asparagine" evidence="2">
    <location>
        <position position="306"/>
    </location>
</feature>
<feature type="glycosylation site" description="N-linked (GlcNAc...) asparagine" evidence="2">
    <location>
        <position position="317"/>
    </location>
</feature>
<feature type="glycosylation site" description="N-linked (GlcNAc...) asparagine" evidence="2">
    <location>
        <position position="368"/>
    </location>
</feature>
<feature type="glycosylation site" description="N-linked (GlcNAc...) asparagine" evidence="2">
    <location>
        <position position="415"/>
    </location>
</feature>
<feature type="disulfide bond" evidence="3">
    <location>
        <begin position="90"/>
        <end position="138"/>
    </location>
</feature>
<feature type="disulfide bond" evidence="3">
    <location>
        <begin position="276"/>
        <end position="324"/>
    </location>
</feature>
<feature type="disulfide bond" evidence="3">
    <location>
        <begin position="375"/>
        <end position="416"/>
    </location>
</feature>
<feature type="splice variant" id="VSP_059367" description="In isoform 3 and isoform 4.">
    <original>YGPDQVHITRESASEMISTIEAELNSSLTLQCWAESKPGAEYRWTLEHSTGEHLGEQLIIRALTWEHDGIYNCTASNSLTGLARSTSVLVKVVG</original>
    <variation>C</variation>
    <location>
        <begin position="344"/>
        <end position="437"/>
    </location>
</feature>
<feature type="splice variant" id="VSP_059368" description="In isoform 2 and isoform 4.">
    <location>
        <begin position="526"/>
        <end position="537"/>
    </location>
</feature>
<feature type="splice variant" id="VSP_059369" description="In isoform 5.">
    <original>ELVNPEPNTYIQINPSV</original>
    <variation>VLGMQQ</variation>
    <location>
        <begin position="580"/>
        <end position="596"/>
    </location>
</feature>
<feature type="sequence variant" id="VAR_056030" description="In dbSNP:rs10408247.">
    <original>A</original>
    <variation>V</variation>
    <location>
        <position position="41"/>
    </location>
</feature>
<feature type="sequence variant" id="VAR_061312" description="In dbSNP:rs36053277.">
    <original>T</original>
    <variation>I</variation>
    <location>
        <position position="87"/>
    </location>
</feature>
<feature type="sequence variant" id="VAR_056031" description="In dbSNP:rs13345196.">
    <original>R</original>
    <variation>H</variation>
    <location>
        <position position="113"/>
    </location>
</feature>
<feature type="sequence variant" id="VAR_056032" description="In dbSNP:rs35443082.">
    <original>I</original>
    <variation>V</variation>
    <location>
        <position position="127"/>
    </location>
</feature>
<feature type="sequence variant" id="VAR_056033" description="In dbSNP:rs16959164.">
    <original>S</original>
    <variation>L</variation>
    <location>
        <position position="355"/>
    </location>
</feature>
<feature type="sequence variant" id="VAR_056034" description="In dbSNP:rs10414398.">
    <original>S</original>
    <variation>F</variation>
    <location>
        <position position="369"/>
    </location>
</feature>
<feature type="sequence variant" id="VAR_059385" description="In dbSNP:rs8100718.">
    <original>R</original>
    <variation>C</variation>
    <location>
        <position position="512"/>
    </location>
</feature>
<feature type="sequence conflict" description="In Ref. 1; ABS57247/ABS57248/ABS57249/ABS57250." evidence="5" ref="1">
    <original>I</original>
    <variation>V</variation>
    <location>
        <position position="108"/>
    </location>
</feature>
<feature type="sequence conflict" description="In Ref. 1; ABS57247." evidence="5" ref="1">
    <original>S</original>
    <variation>P</variation>
    <location>
        <position position="444"/>
    </location>
</feature>
<proteinExistence type="evidence at protein level"/>
<dbReference type="EMBL" id="EU008600">
    <property type="protein sequence ID" value="ABS57247.1"/>
    <property type="molecule type" value="mRNA"/>
</dbReference>
<dbReference type="EMBL" id="EU008601">
    <property type="protein sequence ID" value="ABS57248.1"/>
    <property type="molecule type" value="mRNA"/>
</dbReference>
<dbReference type="EMBL" id="EU008602">
    <property type="protein sequence ID" value="ABS57249.1"/>
    <property type="molecule type" value="mRNA"/>
</dbReference>
<dbReference type="EMBL" id="EU008603">
    <property type="protein sequence ID" value="ABS57250.1"/>
    <property type="molecule type" value="mRNA"/>
</dbReference>
<dbReference type="EMBL" id="AY358129">
    <property type="protein sequence ID" value="AAQ88496.1"/>
    <property type="molecule type" value="mRNA"/>
</dbReference>
<dbReference type="EMBL" id="AC245748">
    <property type="status" value="NOT_ANNOTATED_CDS"/>
    <property type="molecule type" value="Genomic_DNA"/>
</dbReference>
<dbReference type="CCDS" id="CCDS74390.1">
    <molecule id="Q6UY09-4"/>
</dbReference>
<dbReference type="CCDS" id="CCDS74391.1">
    <molecule id="Q6UY09-3"/>
</dbReference>
<dbReference type="CCDS" id="CCDS74392.1">
    <molecule id="Q6UY09-2"/>
</dbReference>
<dbReference type="CCDS" id="CCDS74393.1">
    <molecule id="Q6UY09-1"/>
</dbReference>
<dbReference type="RefSeq" id="NP_001096067.2">
    <molecule id="Q6UY09-1"/>
    <property type="nucleotide sequence ID" value="NM_001102597.3"/>
</dbReference>
<dbReference type="RefSeq" id="NP_001096068.2">
    <molecule id="Q6UY09-4"/>
    <property type="nucleotide sequence ID" value="NM_001102598.3"/>
</dbReference>
<dbReference type="RefSeq" id="NP_001096069.2">
    <molecule id="Q6UY09-3"/>
    <property type="nucleotide sequence ID" value="NM_001102599.3"/>
</dbReference>
<dbReference type="RefSeq" id="NP_001096070.2">
    <molecule id="Q6UY09-2"/>
    <property type="nucleotide sequence ID" value="NM_001102600.3"/>
</dbReference>
<dbReference type="SMR" id="Q6UY09"/>
<dbReference type="FunCoup" id="Q6UY09">
    <property type="interactions" value="5"/>
</dbReference>
<dbReference type="STRING" id="9606.ENSP00000481937"/>
<dbReference type="GlyCosmos" id="Q6UY09">
    <property type="glycosylation" value="7 sites, No reported glycans"/>
</dbReference>
<dbReference type="GlyGen" id="Q6UY09">
    <property type="glycosylation" value="7 sites"/>
</dbReference>
<dbReference type="iPTMnet" id="Q6UY09"/>
<dbReference type="PhosphoSitePlus" id="Q6UY09"/>
<dbReference type="BioMuta" id="CEACAM20"/>
<dbReference type="DMDM" id="73619948"/>
<dbReference type="MassIVE" id="Q6UY09"/>
<dbReference type="PaxDb" id="9606-ENSP00000481937"/>
<dbReference type="PeptideAtlas" id="Q6UY09"/>
<dbReference type="Antibodypedia" id="72273">
    <property type="antibodies" value="23 antibodies from 11 providers"/>
</dbReference>
<dbReference type="DNASU" id="125931"/>
<dbReference type="Ensembl" id="ENST00000611497.4">
    <molecule id="Q6UY09-2"/>
    <property type="protein sequence ID" value="ENSP00000483912.1"/>
    <property type="gene ID" value="ENSG00000273777.6"/>
</dbReference>
<dbReference type="Ensembl" id="ENST00000614577.4">
    <molecule id="Q6UY09-3"/>
    <property type="protein sequence ID" value="ENSP00000482943.1"/>
    <property type="gene ID" value="ENSG00000273777.6"/>
</dbReference>
<dbReference type="Ensembl" id="ENST00000614924.5">
    <molecule id="Q6UY09-1"/>
    <property type="protein sequence ID" value="ENSP00000481937.1"/>
    <property type="gene ID" value="ENSG00000273777.6"/>
</dbReference>
<dbReference type="Ensembl" id="ENST00000620096.4">
    <molecule id="Q6UY09-4"/>
    <property type="protein sequence ID" value="ENSP00000481812.1"/>
    <property type="gene ID" value="ENSG00000273777.6"/>
</dbReference>
<dbReference type="Ensembl" id="ENST00000621342.4">
    <molecule id="Q6UY09-5"/>
    <property type="protein sequence ID" value="ENSP00000480940.1"/>
    <property type="gene ID" value="ENSG00000273777.6"/>
</dbReference>
<dbReference type="GeneID" id="125931"/>
<dbReference type="KEGG" id="hsa:125931"/>
<dbReference type="MANE-Select" id="ENST00000614924.5">
    <property type="protein sequence ID" value="ENSP00000481937.1"/>
    <property type="RefSeq nucleotide sequence ID" value="NM_001102597.3"/>
    <property type="RefSeq protein sequence ID" value="NP_001096067.2"/>
</dbReference>
<dbReference type="AGR" id="HGNC:24879"/>
<dbReference type="CTD" id="125931"/>
<dbReference type="DisGeNET" id="125931"/>
<dbReference type="GeneCards" id="CEACAM20"/>
<dbReference type="HGNC" id="HGNC:24879">
    <property type="gene designation" value="CEACAM20"/>
</dbReference>
<dbReference type="HPA" id="ENSG00000273777">
    <property type="expression patterns" value="Tissue enriched (intestine)"/>
</dbReference>
<dbReference type="neXtProt" id="NX_Q6UY09"/>
<dbReference type="OpenTargets" id="ENSG00000273777"/>
<dbReference type="PharmGKB" id="PA142672134"/>
<dbReference type="VEuPathDB" id="HostDB:ENSG00000273777"/>
<dbReference type="eggNOG" id="ENOG502RXPD">
    <property type="taxonomic scope" value="Eukaryota"/>
</dbReference>
<dbReference type="GeneTree" id="ENSGT01100000263479"/>
<dbReference type="InParanoid" id="Q6UY09"/>
<dbReference type="OMA" id="LTCQTAH"/>
<dbReference type="OrthoDB" id="6159398at2759"/>
<dbReference type="PAN-GO" id="Q6UY09">
    <property type="GO annotations" value="5 GO annotations based on evolutionary models"/>
</dbReference>
<dbReference type="PhylomeDB" id="Q6UY09"/>
<dbReference type="PathwayCommons" id="Q6UY09"/>
<dbReference type="BioGRID-ORCS" id="125931">
    <property type="hits" value="9 hits in 254 CRISPR screens"/>
</dbReference>
<dbReference type="ChiTaRS" id="CEACAM20">
    <property type="organism name" value="human"/>
</dbReference>
<dbReference type="GenomeRNAi" id="125931"/>
<dbReference type="Pharos" id="Q6UY09">
    <property type="development level" value="Tdark"/>
</dbReference>
<dbReference type="PRO" id="PR:Q6UY09"/>
<dbReference type="Proteomes" id="UP000005640">
    <property type="component" value="Chromosome 19"/>
</dbReference>
<dbReference type="RNAct" id="Q6UY09">
    <property type="molecule type" value="protein"/>
</dbReference>
<dbReference type="Bgee" id="ENSG00000273777">
    <property type="expression patterns" value="Expressed in duodenum and 25 other cell types or tissues"/>
</dbReference>
<dbReference type="ExpressionAtlas" id="Q6UY09">
    <property type="expression patterns" value="baseline and differential"/>
</dbReference>
<dbReference type="GO" id="GO:0016324">
    <property type="term" value="C:apical plasma membrane"/>
    <property type="evidence" value="ECO:0007669"/>
    <property type="project" value="UniProtKB-SubCell"/>
</dbReference>
<dbReference type="GO" id="GO:0009986">
    <property type="term" value="C:cell surface"/>
    <property type="evidence" value="ECO:0000318"/>
    <property type="project" value="GO_Central"/>
</dbReference>
<dbReference type="GO" id="GO:0031528">
    <property type="term" value="C:microvillus membrane"/>
    <property type="evidence" value="ECO:0007669"/>
    <property type="project" value="UniProtKB-SubCell"/>
</dbReference>
<dbReference type="GO" id="GO:0005886">
    <property type="term" value="C:plasma membrane"/>
    <property type="evidence" value="ECO:0000318"/>
    <property type="project" value="GO_Central"/>
</dbReference>
<dbReference type="GO" id="GO:1990782">
    <property type="term" value="F:protein tyrosine kinase binding"/>
    <property type="evidence" value="ECO:0000318"/>
    <property type="project" value="GO_Central"/>
</dbReference>
<dbReference type="GO" id="GO:0002376">
    <property type="term" value="P:immune system process"/>
    <property type="evidence" value="ECO:0007669"/>
    <property type="project" value="UniProtKB-KW"/>
</dbReference>
<dbReference type="GO" id="GO:0001819">
    <property type="term" value="P:positive regulation of cytokine production"/>
    <property type="evidence" value="ECO:0007669"/>
    <property type="project" value="Ensembl"/>
</dbReference>
<dbReference type="GO" id="GO:0002682">
    <property type="term" value="P:regulation of immune system process"/>
    <property type="evidence" value="ECO:0000318"/>
    <property type="project" value="GO_Central"/>
</dbReference>
<dbReference type="GO" id="GO:0009617">
    <property type="term" value="P:response to bacterium"/>
    <property type="evidence" value="ECO:0007669"/>
    <property type="project" value="Ensembl"/>
</dbReference>
<dbReference type="GO" id="GO:0007165">
    <property type="term" value="P:signal transduction"/>
    <property type="evidence" value="ECO:0000318"/>
    <property type="project" value="GO_Central"/>
</dbReference>
<dbReference type="CDD" id="cd00096">
    <property type="entry name" value="Ig"/>
    <property type="match status" value="1"/>
</dbReference>
<dbReference type="FunFam" id="2.60.40.10:FF:000244">
    <property type="entry name" value="carcinoembryonic antigen-related cell adhesion molecule 16"/>
    <property type="match status" value="2"/>
</dbReference>
<dbReference type="Gene3D" id="2.60.40.10">
    <property type="entry name" value="Immunoglobulins"/>
    <property type="match status" value="4"/>
</dbReference>
<dbReference type="InterPro" id="IPR007110">
    <property type="entry name" value="Ig-like_dom"/>
</dbReference>
<dbReference type="InterPro" id="IPR036179">
    <property type="entry name" value="Ig-like_dom_sf"/>
</dbReference>
<dbReference type="InterPro" id="IPR013783">
    <property type="entry name" value="Ig-like_fold"/>
</dbReference>
<dbReference type="InterPro" id="IPR003599">
    <property type="entry name" value="Ig_sub"/>
</dbReference>
<dbReference type="InterPro" id="IPR003598">
    <property type="entry name" value="Ig_sub2"/>
</dbReference>
<dbReference type="InterPro" id="IPR052598">
    <property type="entry name" value="IgSF_CEA-related"/>
</dbReference>
<dbReference type="PANTHER" id="PTHR44337:SF20">
    <property type="entry name" value="CARCINOEMBRYONIC ANTIGEN-RELATED CELL ADHESION MOLECULE 5-RELATED"/>
    <property type="match status" value="1"/>
</dbReference>
<dbReference type="PANTHER" id="PTHR44337">
    <property type="entry name" value="CARCINOEMBRYONIC ANTIGEN-RELATED CELL ADHESION MOLECULE 8"/>
    <property type="match status" value="1"/>
</dbReference>
<dbReference type="Pfam" id="PF13927">
    <property type="entry name" value="Ig_3"/>
    <property type="match status" value="4"/>
</dbReference>
<dbReference type="SMART" id="SM00409">
    <property type="entry name" value="IG"/>
    <property type="match status" value="4"/>
</dbReference>
<dbReference type="SMART" id="SM00408">
    <property type="entry name" value="IGc2"/>
    <property type="match status" value="4"/>
</dbReference>
<dbReference type="SUPFAM" id="SSF48726">
    <property type="entry name" value="Immunoglobulin"/>
    <property type="match status" value="4"/>
</dbReference>
<dbReference type="PROSITE" id="PS50835">
    <property type="entry name" value="IG_LIKE"/>
    <property type="match status" value="4"/>
</dbReference>
<accession>Q6UY09</accession>
<accession>A0A087WXE1</accession>
<accession>A0A087WYH6</accession>
<accession>A0A087WYM6</accession>
<accession>A0A087WZX4</accession>
<accession>A0A087X155</accession>
<accession>A7LFK7</accession>
<accession>A7LFK8</accession>
<accession>A7LFK9</accession>
<accession>A7LFL0</accession>
<sequence length="596" mass="65808">MGPADSWGHHWMGILLSASLCTVWSPPAAAQLTLNANPLDATQSEDVVLPVFGTPRTPQIHGRSRELAKPSIAVSPGTAIEQKDMVTFYCTTKDVNITIHWVSNNLSIVFHERMQLSKDGKILTILIVQREDSGTYQCEARDALLSQRSDPIFLDVKYGPDPVEIKLESGVASGEVVEVMEGSSMTFLAETKSHPPCAYTWFLLDSILSHTTRTFTIHAVSREHEGLYRCLVSNSATHLSSLGTLKVRVLETLTMPQVVPSSLNLVENARSVDLTCQTVNQSVNVQWFLSGQPLLPSEHLQLSADNRTLIIHGLQRNDTGPYACEVWNWGSRARSEPLELTINYGPDQVHITRESASEMISTIEAELNSSLTLQCWAESKPGAEYRWTLEHSTGEHLGEQLIIRALTWEHDGIYNCTASNSLTGLARSTSVLVKVVGPQSSSLSSGAIAGIVIGILAVIAVASELGYFLCIRNARRPSRKTTEDPSHETSQPIPKEEHPTEPSSESLSPEYRNISQLQGRIRVELMQPPDLPEETYETKLPSASRRGNSFSPWKPPPKPLMPPLRLVSTVPKNMESIYEELVNPEPNTYIQINPSV</sequence>
<organism>
    <name type="scientific">Homo sapiens</name>
    <name type="common">Human</name>
    <dbReference type="NCBI Taxonomy" id="9606"/>
    <lineage>
        <taxon>Eukaryota</taxon>
        <taxon>Metazoa</taxon>
        <taxon>Chordata</taxon>
        <taxon>Craniata</taxon>
        <taxon>Vertebrata</taxon>
        <taxon>Euteleostomi</taxon>
        <taxon>Mammalia</taxon>
        <taxon>Eutheria</taxon>
        <taxon>Euarchontoglires</taxon>
        <taxon>Primates</taxon>
        <taxon>Haplorrhini</taxon>
        <taxon>Catarrhini</taxon>
        <taxon>Hominidae</taxon>
        <taxon>Homo</taxon>
    </lineage>
</organism>